<dbReference type="EMBL" id="DQ231562">
    <property type="protein sequence ID" value="ABB90058.1"/>
    <property type="molecule type" value="Genomic_DNA"/>
</dbReference>
<dbReference type="EMBL" id="DQ386163">
    <property type="protein sequence ID" value="ABD47075.1"/>
    <property type="molecule type" value="Genomic_DNA"/>
</dbReference>
<dbReference type="RefSeq" id="YP_635657.1">
    <property type="nucleotide sequence ID" value="NC_008096.2"/>
</dbReference>
<dbReference type="SMR" id="Q2VEG0"/>
<dbReference type="STRING" id="4113.Q2VEG0"/>
<dbReference type="GeneID" id="4099862"/>
<dbReference type="KEGG" id="sot:4099862"/>
<dbReference type="InParanoid" id="Q2VEG0"/>
<dbReference type="OrthoDB" id="738066at2759"/>
<dbReference type="Proteomes" id="UP000011115">
    <property type="component" value="Unassembled WGS sequence"/>
</dbReference>
<dbReference type="GO" id="GO:0009535">
    <property type="term" value="C:chloroplast thylakoid membrane"/>
    <property type="evidence" value="ECO:0007669"/>
    <property type="project" value="UniProtKB-SubCell"/>
</dbReference>
<dbReference type="GO" id="GO:0009512">
    <property type="term" value="C:cytochrome b6f complex"/>
    <property type="evidence" value="ECO:0007669"/>
    <property type="project" value="InterPro"/>
</dbReference>
<dbReference type="GO" id="GO:0045158">
    <property type="term" value="F:electron transporter, transferring electrons within cytochrome b6/f complex of photosystem II activity"/>
    <property type="evidence" value="ECO:0007669"/>
    <property type="project" value="UniProtKB-UniRule"/>
</dbReference>
<dbReference type="GO" id="GO:0015979">
    <property type="term" value="P:photosynthesis"/>
    <property type="evidence" value="ECO:0007669"/>
    <property type="project" value="UniProtKB-KW"/>
</dbReference>
<dbReference type="HAMAP" id="MF_00433">
    <property type="entry name" value="Cytb6_f_PetL"/>
    <property type="match status" value="1"/>
</dbReference>
<dbReference type="InterPro" id="IPR007802">
    <property type="entry name" value="Cyt_b6/f_cplx_su6"/>
</dbReference>
<dbReference type="PANTHER" id="PTHR37266">
    <property type="entry name" value="CYTOCHROME B6-F COMPLEX SUBUNIT 6"/>
    <property type="match status" value="1"/>
</dbReference>
<dbReference type="PANTHER" id="PTHR37266:SF1">
    <property type="entry name" value="CYTOCHROME B6-F COMPLEX SUBUNIT 6"/>
    <property type="match status" value="1"/>
</dbReference>
<dbReference type="Pfam" id="PF05115">
    <property type="entry name" value="PetL"/>
    <property type="match status" value="1"/>
</dbReference>
<dbReference type="SUPFAM" id="SSF103436">
    <property type="entry name" value="PetL subunit of the cytochrome b6f complex"/>
    <property type="match status" value="1"/>
</dbReference>
<accession>Q2VEG0</accession>
<accession>Q27S32</accession>
<proteinExistence type="inferred from homology"/>
<organism>
    <name type="scientific">Solanum tuberosum</name>
    <name type="common">Potato</name>
    <dbReference type="NCBI Taxonomy" id="4113"/>
    <lineage>
        <taxon>Eukaryota</taxon>
        <taxon>Viridiplantae</taxon>
        <taxon>Streptophyta</taxon>
        <taxon>Embryophyta</taxon>
        <taxon>Tracheophyta</taxon>
        <taxon>Spermatophyta</taxon>
        <taxon>Magnoliopsida</taxon>
        <taxon>eudicotyledons</taxon>
        <taxon>Gunneridae</taxon>
        <taxon>Pentapetalae</taxon>
        <taxon>asterids</taxon>
        <taxon>lamiids</taxon>
        <taxon>Solanales</taxon>
        <taxon>Solanaceae</taxon>
        <taxon>Solanoideae</taxon>
        <taxon>Solaneae</taxon>
        <taxon>Solanum</taxon>
    </lineage>
</organism>
<gene>
    <name evidence="1" type="primary">petL</name>
</gene>
<feature type="chain" id="PRO_0000233686" description="Cytochrome b6-f complex subunit 6">
    <location>
        <begin position="1"/>
        <end position="31"/>
    </location>
</feature>
<feature type="transmembrane region" description="Helical" evidence="1">
    <location>
        <begin position="4"/>
        <end position="24"/>
    </location>
</feature>
<feature type="sequence conflict" description="In Ref. 2; ABD47075." evidence="2" ref="2">
    <original>T</original>
    <variation>I</variation>
    <location>
        <position position="28"/>
    </location>
</feature>
<protein>
    <recommendedName>
        <fullName evidence="1">Cytochrome b6-f complex subunit 6</fullName>
    </recommendedName>
    <alternativeName>
        <fullName evidence="1">Cytochrome b6-f complex subunit PetL</fullName>
    </alternativeName>
    <alternativeName>
        <fullName evidence="1">Cytochrome b6-f complex subunit VI</fullName>
    </alternativeName>
</protein>
<keyword id="KW-0150">Chloroplast</keyword>
<keyword id="KW-0249">Electron transport</keyword>
<keyword id="KW-0472">Membrane</keyword>
<keyword id="KW-0602">Photosynthesis</keyword>
<keyword id="KW-0934">Plastid</keyword>
<keyword id="KW-1185">Reference proteome</keyword>
<keyword id="KW-0793">Thylakoid</keyword>
<keyword id="KW-0812">Transmembrane</keyword>
<keyword id="KW-1133">Transmembrane helix</keyword>
<keyword id="KW-0813">Transport</keyword>
<geneLocation type="chloroplast"/>
<evidence type="ECO:0000255" key="1">
    <source>
        <dbReference type="HAMAP-Rule" id="MF_00433"/>
    </source>
</evidence>
<evidence type="ECO:0000305" key="2"/>
<sequence>MLTITSYFGFLLAALTITSALFIGLSKTRLI</sequence>
<comment type="function">
    <text evidence="1">Component of the cytochrome b6-f complex, which mediates electron transfer between photosystem II (PSII) and photosystem I (PSI), cyclic electron flow around PSI, and state transitions. PetL is important for photoautotrophic growth as well as for electron transfer efficiency and stability of the cytochrome b6-f complex.</text>
</comment>
<comment type="subunit">
    <text evidence="1">The 4 large subunits of the cytochrome b6-f complex are cytochrome b6, subunit IV (17 kDa polypeptide, PetD), cytochrome f and the Rieske protein, while the 4 small subunits are PetG, PetL, PetM and PetN. The complex functions as a dimer.</text>
</comment>
<comment type="subcellular location">
    <subcellularLocation>
        <location evidence="1">Plastid</location>
        <location evidence="1">Chloroplast thylakoid membrane</location>
        <topology evidence="1">Single-pass membrane protein</topology>
    </subcellularLocation>
</comment>
<comment type="similarity">
    <text evidence="1">Belongs to the PetL family.</text>
</comment>
<name>PETL_SOLTU</name>
<reference key="1">
    <citation type="journal article" date="2006" name="Plant Cell Rep.">
        <title>The complete chloroplast genome sequences of Solanum tuberosum and comparative analysis with Solanaceae species identified the presence of a 241-bp deletion in cultivated potato chloroplast DNA sequence.</title>
        <authorList>
            <person name="Chung H.-J."/>
            <person name="Jung J.D."/>
            <person name="Park H.-W."/>
            <person name="Kim J.-H."/>
            <person name="Cha H.W."/>
            <person name="Min S.R."/>
            <person name="Jeong W.-J."/>
            <person name="Liu J.R."/>
        </authorList>
    </citation>
    <scope>NUCLEOTIDE SEQUENCE [LARGE SCALE GENOMIC DNA]</scope>
    <source>
        <strain>cv. Desiree</strain>
    </source>
</reference>
<reference key="2">
    <citation type="submission" date="2006-02" db="EMBL/GenBank/DDBJ databases">
        <title>Complete chloroplast genome sequences of Solanum tuberosum cultivar Desiree and comparative analyses with other Solanaceae genomes.</title>
        <authorList>
            <person name="Gargano D."/>
            <person name="Scotti N."/>
            <person name="Vezzi A."/>
            <person name="Bilardi A."/>
            <person name="Valle G."/>
            <person name="Grillo S."/>
            <person name="Cardi T."/>
        </authorList>
    </citation>
    <scope>NUCLEOTIDE SEQUENCE [LARGE SCALE GENOMIC DNA]</scope>
    <source>
        <strain>cv. Desiree</strain>
    </source>
</reference>